<feature type="chain" id="PRO_0000157977" description="Protein-glutamate methylesterase/protein-glutamine glutaminase">
    <location>
        <begin position="1"/>
        <end position="354"/>
    </location>
</feature>
<feature type="domain" description="Response regulatory" evidence="1">
    <location>
        <begin position="6"/>
        <end position="123"/>
    </location>
</feature>
<feature type="domain" description="CheB-type methylesterase" evidence="1">
    <location>
        <begin position="159"/>
        <end position="351"/>
    </location>
</feature>
<feature type="active site" evidence="1">
    <location>
        <position position="171"/>
    </location>
</feature>
<feature type="active site" evidence="1">
    <location>
        <position position="197"/>
    </location>
</feature>
<feature type="active site" evidence="1">
    <location>
        <position position="293"/>
    </location>
</feature>
<feature type="modified residue" description="4-aspartylphosphate" evidence="1">
    <location>
        <position position="57"/>
    </location>
</feature>
<keyword id="KW-0145">Chemotaxis</keyword>
<keyword id="KW-0963">Cytoplasm</keyword>
<keyword id="KW-0378">Hydrolase</keyword>
<keyword id="KW-0597">Phosphoprotein</keyword>
<keyword id="KW-1185">Reference proteome</keyword>
<organism>
    <name type="scientific">Bdellovibrio bacteriovorus (strain ATCC 15356 / DSM 50701 / NCIMB 9529 / HD100)</name>
    <dbReference type="NCBI Taxonomy" id="264462"/>
    <lineage>
        <taxon>Bacteria</taxon>
        <taxon>Pseudomonadati</taxon>
        <taxon>Bdellovibrionota</taxon>
        <taxon>Bdellovibrionia</taxon>
        <taxon>Bdellovibrionales</taxon>
        <taxon>Pseudobdellovibrionaceae</taxon>
        <taxon>Bdellovibrio</taxon>
    </lineage>
</organism>
<gene>
    <name evidence="1" type="primary">cheB</name>
    <name type="ordered locus">Bd3467</name>
</gene>
<sequence>MAQKIRVLIVDDSAVIRKLLEKIFSSCADIEVVGTASDPYIARDKLVALKPDVMTLDVEMPRMDGISFLEKVMQHFPTRTIIFSSLAKTGSETYLRALEAGAIEIMEKPSIDVSQSLETLSAAIIEKVKAVAKARINPIKAVVPNPGAPVQKVASTSLARTTHQLLAVASSTGGTEALKVFLSGMPADIPGTLVVQHMPPGFTKSFAENLDKMFPFEVKEAQEGDQVVPGRVLIAPGNYHMEITRSGAFYYVKLHQGPALHSVRPAADYLMKSVAKYVGKNAMGVVLTGMGKDGAEGLLEMKNAGAYTVAQNEETCVVYGMPAAAVALGAADKVLPLDRIAGDLLKQLQTRNAA</sequence>
<dbReference type="EC" id="3.1.1.61" evidence="1"/>
<dbReference type="EC" id="3.5.1.44" evidence="1"/>
<dbReference type="EMBL" id="BX842655">
    <property type="protein sequence ID" value="CAE78259.1"/>
    <property type="molecule type" value="Genomic_DNA"/>
</dbReference>
<dbReference type="RefSeq" id="WP_011165797.1">
    <property type="nucleotide sequence ID" value="NC_005363.1"/>
</dbReference>
<dbReference type="SMR" id="P62635"/>
<dbReference type="STRING" id="264462.Bd3467"/>
<dbReference type="GeneID" id="93014276"/>
<dbReference type="KEGG" id="bba:Bd3467"/>
<dbReference type="eggNOG" id="COG2201">
    <property type="taxonomic scope" value="Bacteria"/>
</dbReference>
<dbReference type="HOGENOM" id="CLU_000445_51_0_7"/>
<dbReference type="Proteomes" id="UP000008080">
    <property type="component" value="Chromosome"/>
</dbReference>
<dbReference type="GO" id="GO:0005737">
    <property type="term" value="C:cytoplasm"/>
    <property type="evidence" value="ECO:0007669"/>
    <property type="project" value="UniProtKB-SubCell"/>
</dbReference>
<dbReference type="GO" id="GO:0000156">
    <property type="term" value="F:phosphorelay response regulator activity"/>
    <property type="evidence" value="ECO:0007669"/>
    <property type="project" value="InterPro"/>
</dbReference>
<dbReference type="GO" id="GO:0008984">
    <property type="term" value="F:protein-glutamate methylesterase activity"/>
    <property type="evidence" value="ECO:0007669"/>
    <property type="project" value="UniProtKB-UniRule"/>
</dbReference>
<dbReference type="GO" id="GO:0050568">
    <property type="term" value="F:protein-glutamine glutaminase activity"/>
    <property type="evidence" value="ECO:0007669"/>
    <property type="project" value="UniProtKB-UniRule"/>
</dbReference>
<dbReference type="GO" id="GO:0006935">
    <property type="term" value="P:chemotaxis"/>
    <property type="evidence" value="ECO:0007669"/>
    <property type="project" value="UniProtKB-UniRule"/>
</dbReference>
<dbReference type="CDD" id="cd16432">
    <property type="entry name" value="CheB_Rec"/>
    <property type="match status" value="1"/>
</dbReference>
<dbReference type="CDD" id="cd17541">
    <property type="entry name" value="REC_CheB-like"/>
    <property type="match status" value="1"/>
</dbReference>
<dbReference type="Gene3D" id="3.40.50.2300">
    <property type="match status" value="1"/>
</dbReference>
<dbReference type="Gene3D" id="3.40.50.180">
    <property type="entry name" value="Methylesterase CheB, C-terminal domain"/>
    <property type="match status" value="1"/>
</dbReference>
<dbReference type="HAMAP" id="MF_00099">
    <property type="entry name" value="CheB_chemtxs"/>
    <property type="match status" value="1"/>
</dbReference>
<dbReference type="InterPro" id="IPR008248">
    <property type="entry name" value="CheB-like"/>
</dbReference>
<dbReference type="InterPro" id="IPR035909">
    <property type="entry name" value="CheB_C"/>
</dbReference>
<dbReference type="InterPro" id="IPR011006">
    <property type="entry name" value="CheY-like_superfamily"/>
</dbReference>
<dbReference type="InterPro" id="IPR000673">
    <property type="entry name" value="Sig_transdc_resp-reg_Me-estase"/>
</dbReference>
<dbReference type="InterPro" id="IPR001789">
    <property type="entry name" value="Sig_transdc_resp-reg_receiver"/>
</dbReference>
<dbReference type="NCBIfam" id="NF001965">
    <property type="entry name" value="PRK00742.1"/>
    <property type="match status" value="1"/>
</dbReference>
<dbReference type="NCBIfam" id="NF009206">
    <property type="entry name" value="PRK12555.1"/>
    <property type="match status" value="1"/>
</dbReference>
<dbReference type="PANTHER" id="PTHR42872">
    <property type="entry name" value="PROTEIN-GLUTAMATE METHYLESTERASE/PROTEIN-GLUTAMINE GLUTAMINASE"/>
    <property type="match status" value="1"/>
</dbReference>
<dbReference type="PANTHER" id="PTHR42872:SF6">
    <property type="entry name" value="PROTEIN-GLUTAMATE METHYLESTERASE_PROTEIN-GLUTAMINE GLUTAMINASE"/>
    <property type="match status" value="1"/>
</dbReference>
<dbReference type="Pfam" id="PF01339">
    <property type="entry name" value="CheB_methylest"/>
    <property type="match status" value="1"/>
</dbReference>
<dbReference type="Pfam" id="PF00072">
    <property type="entry name" value="Response_reg"/>
    <property type="match status" value="1"/>
</dbReference>
<dbReference type="PIRSF" id="PIRSF000876">
    <property type="entry name" value="RR_chemtxs_CheB"/>
    <property type="match status" value="1"/>
</dbReference>
<dbReference type="SMART" id="SM00448">
    <property type="entry name" value="REC"/>
    <property type="match status" value="1"/>
</dbReference>
<dbReference type="SUPFAM" id="SSF52172">
    <property type="entry name" value="CheY-like"/>
    <property type="match status" value="1"/>
</dbReference>
<dbReference type="SUPFAM" id="SSF52738">
    <property type="entry name" value="Methylesterase CheB, C-terminal domain"/>
    <property type="match status" value="1"/>
</dbReference>
<dbReference type="PROSITE" id="PS50122">
    <property type="entry name" value="CHEB"/>
    <property type="match status" value="1"/>
</dbReference>
<dbReference type="PROSITE" id="PS50110">
    <property type="entry name" value="RESPONSE_REGULATORY"/>
    <property type="match status" value="1"/>
</dbReference>
<evidence type="ECO:0000255" key="1">
    <source>
        <dbReference type="HAMAP-Rule" id="MF_00099"/>
    </source>
</evidence>
<proteinExistence type="inferred from homology"/>
<protein>
    <recommendedName>
        <fullName evidence="1">Protein-glutamate methylesterase/protein-glutamine glutaminase</fullName>
        <ecNumber evidence="1">3.1.1.61</ecNumber>
        <ecNumber evidence="1">3.5.1.44</ecNumber>
    </recommendedName>
</protein>
<accession>P62635</accession>
<reference key="1">
    <citation type="journal article" date="2004" name="Science">
        <title>A predator unmasked: life cycle of Bdellovibrio bacteriovorus from a genomic perspective.</title>
        <authorList>
            <person name="Rendulic S."/>
            <person name="Jagtap P."/>
            <person name="Rosinus A."/>
            <person name="Eppinger M."/>
            <person name="Baar C."/>
            <person name="Lanz C."/>
            <person name="Keller H."/>
            <person name="Lambert C."/>
            <person name="Evans K.J."/>
            <person name="Goesmann A."/>
            <person name="Meyer F."/>
            <person name="Sockett R.E."/>
            <person name="Schuster S.C."/>
        </authorList>
    </citation>
    <scope>NUCLEOTIDE SEQUENCE [LARGE SCALE GENOMIC DNA]</scope>
    <source>
        <strain>ATCC 15356 / DSM 50701 / NCIMB 9529 / HD100</strain>
    </source>
</reference>
<comment type="function">
    <text evidence="1">Involved in chemotaxis. Part of a chemotaxis signal transduction system that modulates chemotaxis in response to various stimuli. Catalyzes the demethylation of specific methylglutamate residues introduced into the chemoreceptors (methyl-accepting chemotaxis proteins or MCP) by CheR. Also mediates the irreversible deamidation of specific glutamine residues to glutamic acid.</text>
</comment>
<comment type="catalytic activity">
    <reaction evidence="1">
        <text>[protein]-L-glutamate 5-O-methyl ester + H2O = L-glutamyl-[protein] + methanol + H(+)</text>
        <dbReference type="Rhea" id="RHEA:23236"/>
        <dbReference type="Rhea" id="RHEA-COMP:10208"/>
        <dbReference type="Rhea" id="RHEA-COMP:10311"/>
        <dbReference type="ChEBI" id="CHEBI:15377"/>
        <dbReference type="ChEBI" id="CHEBI:15378"/>
        <dbReference type="ChEBI" id="CHEBI:17790"/>
        <dbReference type="ChEBI" id="CHEBI:29973"/>
        <dbReference type="ChEBI" id="CHEBI:82795"/>
        <dbReference type="EC" id="3.1.1.61"/>
    </reaction>
</comment>
<comment type="catalytic activity">
    <reaction evidence="1">
        <text>L-glutaminyl-[protein] + H2O = L-glutamyl-[protein] + NH4(+)</text>
        <dbReference type="Rhea" id="RHEA:16441"/>
        <dbReference type="Rhea" id="RHEA-COMP:10207"/>
        <dbReference type="Rhea" id="RHEA-COMP:10208"/>
        <dbReference type="ChEBI" id="CHEBI:15377"/>
        <dbReference type="ChEBI" id="CHEBI:28938"/>
        <dbReference type="ChEBI" id="CHEBI:29973"/>
        <dbReference type="ChEBI" id="CHEBI:30011"/>
        <dbReference type="EC" id="3.5.1.44"/>
    </reaction>
</comment>
<comment type="subcellular location">
    <subcellularLocation>
        <location evidence="1">Cytoplasm</location>
    </subcellularLocation>
</comment>
<comment type="domain">
    <text evidence="1">Contains a C-terminal catalytic domain, and an N-terminal region which modulates catalytic activity.</text>
</comment>
<comment type="PTM">
    <text evidence="1">Phosphorylated by CheA. Phosphorylation of the N-terminal regulatory domain activates the methylesterase activity.</text>
</comment>
<comment type="similarity">
    <text evidence="1">Belongs to the CheB family.</text>
</comment>
<name>CHEB_BDEBA</name>